<reference key="1">
    <citation type="journal article" date="2007" name="DNA Res.">
        <title>Complete genomic structure of the bloom-forming toxic cyanobacterium Microcystis aeruginosa NIES-843.</title>
        <authorList>
            <person name="Kaneko T."/>
            <person name="Nakajima N."/>
            <person name="Okamoto S."/>
            <person name="Suzuki I."/>
            <person name="Tanabe Y."/>
            <person name="Tamaoki M."/>
            <person name="Nakamura Y."/>
            <person name="Kasai F."/>
            <person name="Watanabe A."/>
            <person name="Kawashima K."/>
            <person name="Kishida Y."/>
            <person name="Ono A."/>
            <person name="Shimizu Y."/>
            <person name="Takahashi C."/>
            <person name="Minami C."/>
            <person name="Fujishiro T."/>
            <person name="Kohara M."/>
            <person name="Katoh M."/>
            <person name="Nakazaki N."/>
            <person name="Nakayama S."/>
            <person name="Yamada M."/>
            <person name="Tabata S."/>
            <person name="Watanabe M.M."/>
        </authorList>
    </citation>
    <scope>NUCLEOTIDE SEQUENCE [LARGE SCALE GENOMIC DNA]</scope>
    <source>
        <strain>NIES-843 / IAM M-247</strain>
    </source>
</reference>
<name>RL20_MICAN</name>
<feature type="chain" id="PRO_1000080079" description="Large ribosomal subunit protein bL20">
    <location>
        <begin position="1"/>
        <end position="115"/>
    </location>
</feature>
<sequence>MSRVKRGNVARKRRKKVLKLAKGFRGSHSRLFRTANQQVMKALRNAYRDRRKRKRDFRRLWITRINAAARQQGISYSQLTGQLKKANILLNRKMLAQLAVLDPVAFAKVVETAKG</sequence>
<evidence type="ECO:0000255" key="1">
    <source>
        <dbReference type="HAMAP-Rule" id="MF_00382"/>
    </source>
</evidence>
<evidence type="ECO:0000305" key="2"/>
<dbReference type="EMBL" id="AP009552">
    <property type="protein sequence ID" value="BAG04156.1"/>
    <property type="molecule type" value="Genomic_DNA"/>
</dbReference>
<dbReference type="RefSeq" id="WP_002739593.1">
    <property type="nucleotide sequence ID" value="NC_010296.1"/>
</dbReference>
<dbReference type="SMR" id="B0JSJ8"/>
<dbReference type="STRING" id="449447.MAE_43340"/>
<dbReference type="PaxDb" id="449447-MAE_43340"/>
<dbReference type="EnsemblBacteria" id="BAG04156">
    <property type="protein sequence ID" value="BAG04156"/>
    <property type="gene ID" value="MAE_43340"/>
</dbReference>
<dbReference type="KEGG" id="mar:MAE_43340"/>
<dbReference type="eggNOG" id="COG0292">
    <property type="taxonomic scope" value="Bacteria"/>
</dbReference>
<dbReference type="HOGENOM" id="CLU_123265_0_1_3"/>
<dbReference type="BioCyc" id="MAER449447:MAE_RS18815-MONOMER"/>
<dbReference type="Proteomes" id="UP000001510">
    <property type="component" value="Chromosome"/>
</dbReference>
<dbReference type="GO" id="GO:1990904">
    <property type="term" value="C:ribonucleoprotein complex"/>
    <property type="evidence" value="ECO:0007669"/>
    <property type="project" value="UniProtKB-KW"/>
</dbReference>
<dbReference type="GO" id="GO:0005840">
    <property type="term" value="C:ribosome"/>
    <property type="evidence" value="ECO:0007669"/>
    <property type="project" value="UniProtKB-KW"/>
</dbReference>
<dbReference type="GO" id="GO:0019843">
    <property type="term" value="F:rRNA binding"/>
    <property type="evidence" value="ECO:0007669"/>
    <property type="project" value="UniProtKB-UniRule"/>
</dbReference>
<dbReference type="GO" id="GO:0003735">
    <property type="term" value="F:structural constituent of ribosome"/>
    <property type="evidence" value="ECO:0007669"/>
    <property type="project" value="InterPro"/>
</dbReference>
<dbReference type="GO" id="GO:0000027">
    <property type="term" value="P:ribosomal large subunit assembly"/>
    <property type="evidence" value="ECO:0007669"/>
    <property type="project" value="UniProtKB-UniRule"/>
</dbReference>
<dbReference type="GO" id="GO:0006412">
    <property type="term" value="P:translation"/>
    <property type="evidence" value="ECO:0007669"/>
    <property type="project" value="InterPro"/>
</dbReference>
<dbReference type="CDD" id="cd07026">
    <property type="entry name" value="Ribosomal_L20"/>
    <property type="match status" value="1"/>
</dbReference>
<dbReference type="FunFam" id="1.10.1900.20:FF:000001">
    <property type="entry name" value="50S ribosomal protein L20"/>
    <property type="match status" value="1"/>
</dbReference>
<dbReference type="Gene3D" id="6.10.160.10">
    <property type="match status" value="1"/>
</dbReference>
<dbReference type="Gene3D" id="1.10.1900.20">
    <property type="entry name" value="Ribosomal protein L20"/>
    <property type="match status" value="1"/>
</dbReference>
<dbReference type="HAMAP" id="MF_00382">
    <property type="entry name" value="Ribosomal_bL20"/>
    <property type="match status" value="1"/>
</dbReference>
<dbReference type="InterPro" id="IPR005813">
    <property type="entry name" value="Ribosomal_bL20"/>
</dbReference>
<dbReference type="InterPro" id="IPR049946">
    <property type="entry name" value="RIBOSOMAL_L20_CS"/>
</dbReference>
<dbReference type="InterPro" id="IPR035566">
    <property type="entry name" value="Ribosomal_protein_bL20_C"/>
</dbReference>
<dbReference type="NCBIfam" id="TIGR01032">
    <property type="entry name" value="rplT_bact"/>
    <property type="match status" value="1"/>
</dbReference>
<dbReference type="PANTHER" id="PTHR10986">
    <property type="entry name" value="39S RIBOSOMAL PROTEIN L20"/>
    <property type="match status" value="1"/>
</dbReference>
<dbReference type="Pfam" id="PF00453">
    <property type="entry name" value="Ribosomal_L20"/>
    <property type="match status" value="1"/>
</dbReference>
<dbReference type="PRINTS" id="PR00062">
    <property type="entry name" value="RIBOSOMALL20"/>
</dbReference>
<dbReference type="SUPFAM" id="SSF74731">
    <property type="entry name" value="Ribosomal protein L20"/>
    <property type="match status" value="1"/>
</dbReference>
<dbReference type="PROSITE" id="PS00937">
    <property type="entry name" value="RIBOSOMAL_L20"/>
    <property type="match status" value="1"/>
</dbReference>
<organism>
    <name type="scientific">Microcystis aeruginosa (strain NIES-843 / IAM M-2473)</name>
    <dbReference type="NCBI Taxonomy" id="449447"/>
    <lineage>
        <taxon>Bacteria</taxon>
        <taxon>Bacillati</taxon>
        <taxon>Cyanobacteriota</taxon>
        <taxon>Cyanophyceae</taxon>
        <taxon>Oscillatoriophycideae</taxon>
        <taxon>Chroococcales</taxon>
        <taxon>Microcystaceae</taxon>
        <taxon>Microcystis</taxon>
    </lineage>
</organism>
<gene>
    <name evidence="1" type="primary">rplT</name>
    <name evidence="1" type="synonym">rpl20</name>
    <name type="ordered locus">MAE_43340</name>
</gene>
<keyword id="KW-0687">Ribonucleoprotein</keyword>
<keyword id="KW-0689">Ribosomal protein</keyword>
<keyword id="KW-0694">RNA-binding</keyword>
<keyword id="KW-0699">rRNA-binding</keyword>
<protein>
    <recommendedName>
        <fullName evidence="1">Large ribosomal subunit protein bL20</fullName>
    </recommendedName>
    <alternativeName>
        <fullName evidence="2">50S ribosomal protein L20</fullName>
    </alternativeName>
</protein>
<accession>B0JSJ8</accession>
<proteinExistence type="inferred from homology"/>
<comment type="function">
    <text evidence="1">Binds directly to 23S ribosomal RNA and is necessary for the in vitro assembly process of the 50S ribosomal subunit. It is not involved in the protein synthesizing functions of that subunit.</text>
</comment>
<comment type="similarity">
    <text evidence="1">Belongs to the bacterial ribosomal protein bL20 family.</text>
</comment>